<reference key="1">
    <citation type="journal article" date="2005" name="Genome Res.">
        <title>Comparative and functional genomic analyses of the pathogenicity of phytopathogen Xanthomonas campestris pv. campestris.</title>
        <authorList>
            <person name="Qian W."/>
            <person name="Jia Y."/>
            <person name="Ren S.-X."/>
            <person name="He Y.-Q."/>
            <person name="Feng J.-X."/>
            <person name="Lu L.-F."/>
            <person name="Sun Q."/>
            <person name="Ying G."/>
            <person name="Tang D.-J."/>
            <person name="Tang H."/>
            <person name="Wu W."/>
            <person name="Hao P."/>
            <person name="Wang L."/>
            <person name="Jiang B.-L."/>
            <person name="Zeng S."/>
            <person name="Gu W.-Y."/>
            <person name="Lu G."/>
            <person name="Rong L."/>
            <person name="Tian Y."/>
            <person name="Yao Z."/>
            <person name="Fu G."/>
            <person name="Chen B."/>
            <person name="Fang R."/>
            <person name="Qiang B."/>
            <person name="Chen Z."/>
            <person name="Zhao G.-P."/>
            <person name="Tang J.-L."/>
            <person name="He C."/>
        </authorList>
    </citation>
    <scope>NUCLEOTIDE SEQUENCE [LARGE SCALE GENOMIC DNA]</scope>
    <source>
        <strain>8004</strain>
    </source>
</reference>
<reference key="2">
    <citation type="journal article" date="2024" name="Commun. Biol.">
        <title>Structural insights into Xanthomonas campestris pv. campestris NAD+ biosynthesis via the NAM salvage pathway.</title>
        <authorList>
            <person name="Xu G."/>
            <person name="Ma J."/>
            <person name="Fang Q."/>
            <person name="Peng Q."/>
            <person name="Jiao X."/>
            <person name="Hu W."/>
            <person name="Zhao Q."/>
            <person name="Kong Y."/>
            <person name="Liu F."/>
            <person name="Shi X."/>
            <person name="Tang D.J."/>
            <person name="Tang J.L."/>
            <person name="Ming Z."/>
        </authorList>
    </citation>
    <scope>DISRUPTION PHENOTYPE</scope>
    <source>
        <strain>8004</strain>
    </source>
</reference>
<keyword id="KW-0067">ATP-binding</keyword>
<keyword id="KW-0436">Ligase</keyword>
<keyword id="KW-0520">NAD</keyword>
<keyword id="KW-0547">Nucleotide-binding</keyword>
<sequence>MMESAVTAHTLRIAMAQFDFPVGAVTQNTDRIIEYIAAARDEFEADIVLFPELAISGYPPEDLLLRPGFLAHCEQALARIAAATRGIVAVVGWPQSAGSVVYNAASVLREGRIEATYRKRELPNYAVFDERRYFDVDPDGDNCVVTVKGVQVGVVICEDLWFAEPLAKTVQAGAELVLVPNASPYERGKHAQRDALLAERTRESGAAIAYLNVVGGQDALVFDGASVVADGDGTVHPAAAAFVDQWLVVDYAAGERSFTPVVWVDDGDESMDALAWRAVVRGLKDYCGKNGFRKVWLGLSGGIDSALVLAMAVDALGGENVTAVRLPSRYTAGLSNDLADEQCRALGVKLETIAIEPAFEGLLAALGPLFADTQPDITEENLQSRSRGVILMALSNKFGGLVLTTGNKSEYAVGYATIYGDMCGGYAPLKDLYKTEVFGLAKWRNTVGGAPVIPPAVISRPPSAELRDNQTDQDSLPPYDVLDGILYRYVDQEQSRDDIVAAGYAADTVEHVLRLVRLNEWKRHQAAPGPKVSRRAFGRERRYPITNGYSGQ</sequence>
<organism>
    <name type="scientific">Xanthomonas campestris pv. campestris (strain 8004)</name>
    <dbReference type="NCBI Taxonomy" id="314565"/>
    <lineage>
        <taxon>Bacteria</taxon>
        <taxon>Pseudomonadati</taxon>
        <taxon>Pseudomonadota</taxon>
        <taxon>Gammaproteobacteria</taxon>
        <taxon>Lysobacterales</taxon>
        <taxon>Lysobacteraceae</taxon>
        <taxon>Xanthomonas</taxon>
    </lineage>
</organism>
<dbReference type="EC" id="6.3.5.1" evidence="1"/>
<dbReference type="EMBL" id="CP000050">
    <property type="protein sequence ID" value="AAY48137.1"/>
    <property type="molecule type" value="Genomic_DNA"/>
</dbReference>
<dbReference type="KEGG" id="xcb:XC_1067"/>
<dbReference type="HOGENOM" id="CLU_022313_2_0_6"/>
<dbReference type="UniPathway" id="UPA00253">
    <property type="reaction ID" value="UER00334"/>
</dbReference>
<dbReference type="Proteomes" id="UP000000420">
    <property type="component" value="Chromosome"/>
</dbReference>
<dbReference type="GO" id="GO:0005737">
    <property type="term" value="C:cytoplasm"/>
    <property type="evidence" value="ECO:0007669"/>
    <property type="project" value="InterPro"/>
</dbReference>
<dbReference type="GO" id="GO:0005524">
    <property type="term" value="F:ATP binding"/>
    <property type="evidence" value="ECO:0007669"/>
    <property type="project" value="UniProtKB-UniRule"/>
</dbReference>
<dbReference type="GO" id="GO:0004359">
    <property type="term" value="F:glutaminase activity"/>
    <property type="evidence" value="ECO:0007669"/>
    <property type="project" value="InterPro"/>
</dbReference>
<dbReference type="GO" id="GO:0003952">
    <property type="term" value="F:NAD+ synthase (glutamine-hydrolyzing) activity"/>
    <property type="evidence" value="ECO:0007669"/>
    <property type="project" value="UniProtKB-EC"/>
</dbReference>
<dbReference type="GO" id="GO:0008795">
    <property type="term" value="F:NAD+ synthase activity"/>
    <property type="evidence" value="ECO:0007669"/>
    <property type="project" value="UniProtKB-UniRule"/>
</dbReference>
<dbReference type="GO" id="GO:0009435">
    <property type="term" value="P:NAD biosynthetic process"/>
    <property type="evidence" value="ECO:0007669"/>
    <property type="project" value="UniProtKB-UniRule"/>
</dbReference>
<dbReference type="CDD" id="cd07570">
    <property type="entry name" value="GAT_Gln-NAD-synth"/>
    <property type="match status" value="1"/>
</dbReference>
<dbReference type="CDD" id="cd00553">
    <property type="entry name" value="NAD_synthase"/>
    <property type="match status" value="1"/>
</dbReference>
<dbReference type="FunFam" id="3.40.50.620:FF:000106">
    <property type="entry name" value="Glutamine-dependent NAD(+) synthetase"/>
    <property type="match status" value="1"/>
</dbReference>
<dbReference type="FunFam" id="3.60.110.10:FF:000035">
    <property type="entry name" value="Glutamine-dependent NAD(+) synthetase"/>
    <property type="match status" value="1"/>
</dbReference>
<dbReference type="Gene3D" id="3.60.110.10">
    <property type="entry name" value="Carbon-nitrogen hydrolase"/>
    <property type="match status" value="1"/>
</dbReference>
<dbReference type="Gene3D" id="3.40.50.620">
    <property type="entry name" value="HUPs"/>
    <property type="match status" value="1"/>
</dbReference>
<dbReference type="HAMAP" id="MF_02090">
    <property type="entry name" value="NadE_glutamine_dep"/>
    <property type="match status" value="1"/>
</dbReference>
<dbReference type="InterPro" id="IPR003010">
    <property type="entry name" value="C-N_Hydrolase"/>
</dbReference>
<dbReference type="InterPro" id="IPR036526">
    <property type="entry name" value="C-N_Hydrolase_sf"/>
</dbReference>
<dbReference type="InterPro" id="IPR014445">
    <property type="entry name" value="Gln-dep_NAD_synthase"/>
</dbReference>
<dbReference type="InterPro" id="IPR022310">
    <property type="entry name" value="NAD/GMP_synthase"/>
</dbReference>
<dbReference type="InterPro" id="IPR003694">
    <property type="entry name" value="NAD_synthase"/>
</dbReference>
<dbReference type="InterPro" id="IPR014729">
    <property type="entry name" value="Rossmann-like_a/b/a_fold"/>
</dbReference>
<dbReference type="NCBIfam" id="TIGR00552">
    <property type="entry name" value="nadE"/>
    <property type="match status" value="1"/>
</dbReference>
<dbReference type="NCBIfam" id="NF010588">
    <property type="entry name" value="PRK13981.1"/>
    <property type="match status" value="1"/>
</dbReference>
<dbReference type="PANTHER" id="PTHR23090:SF9">
    <property type="entry name" value="GLUTAMINE-DEPENDENT NAD(+) SYNTHETASE"/>
    <property type="match status" value="1"/>
</dbReference>
<dbReference type="PANTHER" id="PTHR23090">
    <property type="entry name" value="NH 3 /GLUTAMINE-DEPENDENT NAD + SYNTHETASE"/>
    <property type="match status" value="1"/>
</dbReference>
<dbReference type="Pfam" id="PF00795">
    <property type="entry name" value="CN_hydrolase"/>
    <property type="match status" value="1"/>
</dbReference>
<dbReference type="Pfam" id="PF02540">
    <property type="entry name" value="NAD_synthase"/>
    <property type="match status" value="1"/>
</dbReference>
<dbReference type="PIRSF" id="PIRSF006630">
    <property type="entry name" value="NADS_GAT"/>
    <property type="match status" value="1"/>
</dbReference>
<dbReference type="SUPFAM" id="SSF52402">
    <property type="entry name" value="Adenine nucleotide alpha hydrolases-like"/>
    <property type="match status" value="1"/>
</dbReference>
<dbReference type="SUPFAM" id="SSF56317">
    <property type="entry name" value="Carbon-nitrogen hydrolase"/>
    <property type="match status" value="1"/>
</dbReference>
<dbReference type="PROSITE" id="PS50263">
    <property type="entry name" value="CN_HYDROLASE"/>
    <property type="match status" value="1"/>
</dbReference>
<evidence type="ECO:0000255" key="1">
    <source>
        <dbReference type="HAMAP-Rule" id="MF_02090"/>
    </source>
</evidence>
<evidence type="ECO:0000269" key="2">
    <source>
    </source>
</evidence>
<evidence type="ECO:0000303" key="3">
    <source>
    </source>
</evidence>
<evidence type="ECO:0000305" key="4"/>
<evidence type="ECO:0000312" key="5">
    <source>
        <dbReference type="EMBL" id="AAY48137.1"/>
    </source>
</evidence>
<gene>
    <name evidence="1" type="primary">nadE</name>
    <name evidence="5" type="ordered locus">XC_1067</name>
</gene>
<proteinExistence type="inferred from homology"/>
<name>NADE_XANC8</name>
<comment type="function">
    <text evidence="1">Catalyzes the ATP-dependent amidation of deamido-NAD to form NAD. Uses L-glutamine as a nitrogen source.</text>
</comment>
<comment type="catalytic activity">
    <reaction evidence="1">
        <text>deamido-NAD(+) + L-glutamine + ATP + H2O = L-glutamate + AMP + diphosphate + NAD(+) + H(+)</text>
        <dbReference type="Rhea" id="RHEA:24384"/>
        <dbReference type="ChEBI" id="CHEBI:15377"/>
        <dbReference type="ChEBI" id="CHEBI:15378"/>
        <dbReference type="ChEBI" id="CHEBI:29985"/>
        <dbReference type="ChEBI" id="CHEBI:30616"/>
        <dbReference type="ChEBI" id="CHEBI:33019"/>
        <dbReference type="ChEBI" id="CHEBI:57540"/>
        <dbReference type="ChEBI" id="CHEBI:58359"/>
        <dbReference type="ChEBI" id="CHEBI:58437"/>
        <dbReference type="ChEBI" id="CHEBI:456215"/>
        <dbReference type="EC" id="6.3.5.1"/>
    </reaction>
</comment>
<comment type="pathway">
    <text evidence="1">Cofactor biosynthesis; NAD(+) biosynthesis; NAD(+) from deamido-NAD(+) (L-Gln route): step 1/1.</text>
</comment>
<comment type="disruption phenotype">
    <text evidence="2">The deletion mutant is able to grow in the minimal medium MMX, similar to the wild-type strain (PubMed:38429435). The XC_0719-XC_1067/nadE double deletion mutant is only able to grow in MMX supplemented with NAD(+), but not in MMX alone (PubMed:38429435).</text>
</comment>
<comment type="similarity">
    <text evidence="1">In the C-terminal section; belongs to the NAD synthetase family.</text>
</comment>
<protein>
    <recommendedName>
        <fullName evidence="1">Glutamine-dependent NAD(+) synthetase</fullName>
        <ecNumber evidence="1">6.3.5.1</ecNumber>
    </recommendedName>
    <alternativeName>
        <fullName evidence="1">NAD(+) synthase [glutamine-hydrolyzing]</fullName>
    </alternativeName>
    <alternativeName>
        <fullName evidence="3">NAD(+) synthetase</fullName>
        <shortName evidence="3">NADS</shortName>
    </alternativeName>
</protein>
<accession>A0A0H2X6L3</accession>
<feature type="chain" id="PRO_0000461630" description="Glutamine-dependent NAD(+) synthetase">
    <location>
        <begin position="1"/>
        <end position="552"/>
    </location>
</feature>
<feature type="domain" description="CN hydrolase" evidence="1">
    <location>
        <begin position="11"/>
        <end position="253"/>
    </location>
</feature>
<feature type="region of interest" description="Ligase" evidence="4">
    <location>
        <begin position="275"/>
        <end position="552"/>
    </location>
</feature>
<feature type="active site" description="Proton acceptor; for glutaminase activity" evidence="1">
    <location>
        <position position="52"/>
    </location>
</feature>
<feature type="active site" description="For glutaminase activity" evidence="1">
    <location>
        <position position="119"/>
    </location>
</feature>
<feature type="active site" description="Nucleophile; for glutaminase activity" evidence="1">
    <location>
        <position position="157"/>
    </location>
</feature>
<feature type="binding site" evidence="1">
    <location>
        <position position="125"/>
    </location>
    <ligand>
        <name>L-glutamine</name>
        <dbReference type="ChEBI" id="CHEBI:58359"/>
    </ligand>
</feature>
<feature type="binding site" evidence="1">
    <location>
        <position position="183"/>
    </location>
    <ligand>
        <name>L-glutamine</name>
        <dbReference type="ChEBI" id="CHEBI:58359"/>
    </ligand>
</feature>
<feature type="binding site" evidence="1">
    <location>
        <position position="189"/>
    </location>
    <ligand>
        <name>L-glutamine</name>
        <dbReference type="ChEBI" id="CHEBI:58359"/>
    </ligand>
</feature>
<feature type="binding site" evidence="1">
    <location>
        <begin position="298"/>
        <end position="305"/>
    </location>
    <ligand>
        <name>ATP</name>
        <dbReference type="ChEBI" id="CHEBI:30616"/>
    </ligand>
</feature>
<feature type="binding site" evidence="1">
    <location>
        <position position="381"/>
    </location>
    <ligand>
        <name>deamido-NAD(+)</name>
        <dbReference type="ChEBI" id="CHEBI:58437"/>
        <note>ligand shared between two neighboring subunits</note>
    </ligand>
</feature>
<feature type="binding site" evidence="1">
    <location>
        <position position="405"/>
    </location>
    <ligand>
        <name>ATP</name>
        <dbReference type="ChEBI" id="CHEBI:30616"/>
    </ligand>
</feature>
<feature type="binding site" evidence="1">
    <location>
        <position position="410"/>
    </location>
    <ligand>
        <name>deamido-NAD(+)</name>
        <dbReference type="ChEBI" id="CHEBI:58437"/>
        <note>ligand shared between two neighboring subunits</note>
    </ligand>
</feature>
<feature type="binding site" evidence="1">
    <location>
        <position position="522"/>
    </location>
    <ligand>
        <name>deamido-NAD(+)</name>
        <dbReference type="ChEBI" id="CHEBI:58437"/>
        <note>ligand shared between two neighboring subunits</note>
    </ligand>
</feature>